<dbReference type="EC" id="3.5.1.-" evidence="1"/>
<dbReference type="EMBL" id="NJAI01000001">
    <property type="protein sequence ID" value="PHM57344.1"/>
    <property type="molecule type" value="Genomic_DNA"/>
</dbReference>
<dbReference type="RefSeq" id="WP_069317104.1">
    <property type="nucleotide sequence ID" value="NZ_CAWNQJ010000001.1"/>
</dbReference>
<dbReference type="PDB" id="8QZU">
    <property type="method" value="X-ray"/>
    <property type="resolution" value="1.18 A"/>
    <property type="chains" value="A=1-266"/>
</dbReference>
<dbReference type="PDBsum" id="8QZU"/>
<dbReference type="SMR" id="A0A2G0QDP0"/>
<dbReference type="STRING" id="351679.A9255_13045"/>
<dbReference type="KEGG" id="xho:A9255_13045"/>
<dbReference type="OrthoDB" id="7055710at2"/>
<dbReference type="Proteomes" id="UP000225433">
    <property type="component" value="Unassembled WGS sequence"/>
</dbReference>
<dbReference type="GO" id="GO:0106435">
    <property type="term" value="F:carboxylesterase activity"/>
    <property type="evidence" value="ECO:0007669"/>
    <property type="project" value="UniProtKB-EC"/>
</dbReference>
<dbReference type="Gene3D" id="3.40.50.1820">
    <property type="entry name" value="alpha/beta hydrolase"/>
    <property type="match status" value="1"/>
</dbReference>
<dbReference type="InterPro" id="IPR000073">
    <property type="entry name" value="AB_hydrolase_1"/>
</dbReference>
<dbReference type="InterPro" id="IPR029058">
    <property type="entry name" value="AB_hydrolase_fold"/>
</dbReference>
<dbReference type="InterPro" id="IPR052370">
    <property type="entry name" value="Meta-cleavage_hydrolase"/>
</dbReference>
<dbReference type="PANTHER" id="PTHR43139">
    <property type="entry name" value="SI:DKEY-122A22.2"/>
    <property type="match status" value="1"/>
</dbReference>
<dbReference type="PANTHER" id="PTHR43139:SF52">
    <property type="entry name" value="SI:DKEY-122A22.2"/>
    <property type="match status" value="1"/>
</dbReference>
<dbReference type="Pfam" id="PF12697">
    <property type="entry name" value="Abhydrolase_6"/>
    <property type="match status" value="1"/>
</dbReference>
<dbReference type="PRINTS" id="PR00111">
    <property type="entry name" value="ABHYDROLASE"/>
</dbReference>
<dbReference type="SUPFAM" id="SSF53474">
    <property type="entry name" value="alpha/beta-Hydrolases"/>
    <property type="match status" value="1"/>
</dbReference>
<organism>
    <name type="scientific">Xenorhabdus hominickii</name>
    <dbReference type="NCBI Taxonomy" id="351679"/>
    <lineage>
        <taxon>Bacteria</taxon>
        <taxon>Pseudomonadati</taxon>
        <taxon>Pseudomonadota</taxon>
        <taxon>Gammaproteobacteria</taxon>
        <taxon>Enterobacterales</taxon>
        <taxon>Morganellaceae</taxon>
        <taxon>Xenorhabdus</taxon>
    </lineage>
</organism>
<sequence>MNKVKVGDAQVSYCIDGKGPGLVLVHGTGGDSETNWGHLMPALTNDWTVVRPDYSGSGITSDEGKQLEVKEIAAQVVAAAEAARVVPFDLVGFSLGSAVVIAIAADYPHLVRRIVLLGAFLSSRDIRQKTQFELWRDLIRTDRAALSRLILLTGFSPDFISKQGHDGVSVIINSFVSEINWEGMARQVELDLSIDVSEAARRIEKPTLVIGCSHDHIVPSSQAKSVVRIIRGAQYTELHTGHLAHIENPEEFILLLRSFLLSEDVP</sequence>
<keyword id="KW-0002">3D-structure</keyword>
<keyword id="KW-0378">Hydrolase</keyword>
<keyword id="KW-0719">Serine esterase</keyword>
<feature type="chain" id="PRO_0000462108" description="Pyrrolizixenacetamide deacetylase">
    <location>
        <begin position="1"/>
        <end position="266"/>
    </location>
</feature>
<feature type="active site" description="Nucleophile" evidence="4">
    <location>
        <position position="94"/>
    </location>
</feature>
<feature type="active site" description="Charge relay system" evidence="4">
    <location>
        <position position="215"/>
    </location>
</feature>
<feature type="active site" description="Charge relay system" evidence="4">
    <location>
        <position position="242"/>
    </location>
</feature>
<feature type="binding site" evidence="1 6">
    <location>
        <position position="28"/>
    </location>
    <ligand>
        <name>acetate</name>
        <dbReference type="ChEBI" id="CHEBI:30089"/>
    </ligand>
</feature>
<feature type="binding site" evidence="1 6">
    <location>
        <position position="95"/>
    </location>
    <ligand>
        <name>acetate</name>
        <dbReference type="ChEBI" id="CHEBI:30089"/>
    </ligand>
</feature>
<feature type="binding site" evidence="1 6">
    <location>
        <position position="242"/>
    </location>
    <ligand>
        <name>acetate</name>
        <dbReference type="ChEBI" id="CHEBI:30089"/>
    </ligand>
</feature>
<feature type="mutagenesis site" description="Decrease in catalytic activity." evidence="1">
    <original>N</original>
    <variation>A</variation>
    <variation>D</variation>
    <location>
        <position position="35"/>
    </location>
</feature>
<feature type="mutagenesis site" description="Loss of catalytic activity." evidence="1">
    <original>S</original>
    <variation>A</variation>
    <location>
        <position position="94"/>
    </location>
</feature>
<comment type="function">
    <text evidence="1">Involved in the biosynthetic pathway of pyrrolizwilline, a pyrrolizidine alkaloid. Catalyzes the N-deacetylation of pyrrolizixenacetamide.</text>
</comment>
<comment type="catalytic activity">
    <reaction evidence="1">
        <text>pyrrolizixenacetamide + H2O = 3-amino-5,6,7,7a-tetrahydro-1H-pyrrolizin-1-one + acetate + H(+)</text>
        <dbReference type="Rhea" id="RHEA:83307"/>
        <dbReference type="ChEBI" id="CHEBI:15377"/>
        <dbReference type="ChEBI" id="CHEBI:15378"/>
        <dbReference type="ChEBI" id="CHEBI:30089"/>
        <dbReference type="ChEBI" id="CHEBI:232461"/>
        <dbReference type="ChEBI" id="CHEBI:232462"/>
    </reaction>
    <physiologicalReaction direction="left-to-right" evidence="1">
        <dbReference type="Rhea" id="RHEA:83308"/>
    </physiologicalReaction>
</comment>
<comment type="subunit">
    <text evidence="1">Homodimer.</text>
</comment>
<comment type="disruption phenotype">
    <text evidence="1">Cells lacking this gene are no more able to produce pyrrolizwilline and accumulate pyrrolizixenacetamide.</text>
</comment>
<comment type="similarity">
    <text evidence="3">Belongs to the AB hydrolase superfamily.</text>
</comment>
<accession>A0A2G0QDP0</accession>
<evidence type="ECO:0000269" key="1">
    <source>
    </source>
</evidence>
<evidence type="ECO:0000303" key="2">
    <source>
    </source>
</evidence>
<evidence type="ECO:0000305" key="3"/>
<evidence type="ECO:0000305" key="4">
    <source>
    </source>
</evidence>
<evidence type="ECO:0000312" key="5">
    <source>
        <dbReference type="EMBL" id="PHM57344.1"/>
    </source>
</evidence>
<evidence type="ECO:0007744" key="6">
    <source>
        <dbReference type="PDB" id="8QZU"/>
    </source>
</evidence>
<reference key="1">
    <citation type="journal article" date="2017" name="Nat. Microbiol.">
        <title>Natural product diversity associated with the nematode symbionts Photorhabdus and Xenorhabdus.</title>
        <authorList>
            <person name="Tobias N.J."/>
            <person name="Wolff H."/>
            <person name="Djahanschiri B."/>
            <person name="Grundmann F."/>
            <person name="Kronenwerth M."/>
            <person name="Shi Y.M."/>
            <person name="Simonyi S."/>
            <person name="Grun P."/>
            <person name="Shapiro-Ilan D."/>
            <person name="Pidot S.J."/>
            <person name="Stinear T.P."/>
            <person name="Ebersberger I."/>
            <person name="Bode H.B."/>
        </authorList>
    </citation>
    <scope>NUCLEOTIDE SEQUENCE [LARGE SCALE GENOMIC DNA]</scope>
    <source>
        <strain>DSM 17903 / CIP 109072 / KE01</strain>
    </source>
</reference>
<reference evidence="6" key="2">
    <citation type="journal article" date="2024" name="Angew. Chem. Int. Ed.">
        <title>Pyrrolizwilline, a unique bacterial alkaloid assembled by a nonribosomal peptide synthetase and non-enzymatic dimerization.</title>
        <authorList>
            <person name="Effert J."/>
            <person name="Westphalen M."/>
            <person name="Calderari A."/>
            <person name="Shi Y.M."/>
            <person name="Elamri I."/>
            <person name="Najah S."/>
            <person name="Gruen P."/>
            <person name="Li Y."/>
            <person name="Gruez A."/>
            <person name="Weissman K.J."/>
            <person name="Bode H.B."/>
        </authorList>
    </citation>
    <scope>X-RAY CRYSTALLOGRAPHY (1.18 ANGSTROMS) OF MUTANT ALA-94 IN COMPLEX WITH ACETATE</scope>
    <scope>FUNCTION</scope>
    <scope>CATALYTIC ACTIVITY</scope>
    <scope>DISRUPTION PHENOTYPE</scope>
    <scope>SUBUNIT</scope>
    <scope>ACTIVE SITE</scope>
    <scope>MUTAGENESIS OF ASN-35 AND SER-94</scope>
    <source>
        <strain>DSM 17903 / CIP 109072 / KE01</strain>
    </source>
</reference>
<proteinExistence type="evidence at protein level"/>
<protein>
    <recommendedName>
        <fullName evidence="4">Pyrrolizixenacetamide deacetylase</fullName>
        <ecNumber evidence="1">3.5.1.-</ecNumber>
    </recommendedName>
    <alternativeName>
        <fullName evidence="2">Pyrrolizixenamide hydrolase</fullName>
    </alternativeName>
</protein>
<gene>
    <name evidence="2" type="primary">xhpG</name>
    <name evidence="5" type="ORF">Xhom_00310</name>
</gene>
<name>XHPG_XENHO</name>